<sequence length="116" mass="12521">MSEPQNGRGALFAGGLAAILASTCCLGPLVLVALGFSGAWIGNLTVLEPYRPLFIGAALVALFFAWKRIYRPVQACKPGEVCAIPQVRATYKLIFWIVAVLVLVALGFPYVVPFFY</sequence>
<name>MERT_SALTI</name>
<accession>P0A219</accession>
<accession>P04336</accession>
<gene>
    <name type="primary">merT</name>
    <name type="ordered locus">HCM1.234c</name>
</gene>
<keyword id="KW-0997">Cell inner membrane</keyword>
<keyword id="KW-1003">Cell membrane</keyword>
<keyword id="KW-0472">Membrane</keyword>
<keyword id="KW-0475">Mercuric resistance</keyword>
<keyword id="KW-0476">Mercury</keyword>
<keyword id="KW-0479">Metal-binding</keyword>
<keyword id="KW-0614">Plasmid</keyword>
<keyword id="KW-0812">Transmembrane</keyword>
<keyword id="KW-1133">Transmembrane helix</keyword>
<keyword id="KW-0813">Transport</keyword>
<organism>
    <name type="scientific">Salmonella typhi</name>
    <dbReference type="NCBI Taxonomy" id="90370"/>
    <lineage>
        <taxon>Bacteria</taxon>
        <taxon>Pseudomonadati</taxon>
        <taxon>Pseudomonadota</taxon>
        <taxon>Gammaproteobacteria</taxon>
        <taxon>Enterobacterales</taxon>
        <taxon>Enterobacteriaceae</taxon>
        <taxon>Salmonella</taxon>
    </lineage>
</organism>
<reference key="1">
    <citation type="journal article" date="2001" name="Nature">
        <title>Complete genome sequence of a multiple drug resistant Salmonella enterica serovar Typhi CT18.</title>
        <authorList>
            <person name="Parkhill J."/>
            <person name="Dougan G."/>
            <person name="James K.D."/>
            <person name="Thomson N.R."/>
            <person name="Pickard D."/>
            <person name="Wain J."/>
            <person name="Churcher C.M."/>
            <person name="Mungall K.L."/>
            <person name="Bentley S.D."/>
            <person name="Holden M.T.G."/>
            <person name="Sebaihia M."/>
            <person name="Baker S."/>
            <person name="Basham D."/>
            <person name="Brooks K."/>
            <person name="Chillingworth T."/>
            <person name="Connerton P."/>
            <person name="Cronin A."/>
            <person name="Davis P."/>
            <person name="Davies R.M."/>
            <person name="Dowd L."/>
            <person name="White N."/>
            <person name="Farrar J."/>
            <person name="Feltwell T."/>
            <person name="Hamlin N."/>
            <person name="Haque A."/>
            <person name="Hien T.T."/>
            <person name="Holroyd S."/>
            <person name="Jagels K."/>
            <person name="Krogh A."/>
            <person name="Larsen T.S."/>
            <person name="Leather S."/>
            <person name="Moule S."/>
            <person name="O'Gaora P."/>
            <person name="Parry C."/>
            <person name="Quail M.A."/>
            <person name="Rutherford K.M."/>
            <person name="Simmonds M."/>
            <person name="Skelton J."/>
            <person name="Stevens K."/>
            <person name="Whitehead S."/>
            <person name="Barrell B.G."/>
        </authorList>
    </citation>
    <scope>NUCLEOTIDE SEQUENCE [LARGE SCALE GENOMIC DNA]</scope>
    <source>
        <strain>CT18</strain>
    </source>
</reference>
<protein>
    <recommendedName>
        <fullName evidence="1">Mercuric transport protein MerT</fullName>
    </recommendedName>
    <alternativeName>
        <fullName evidence="1">Mercury ion transport protein</fullName>
    </alternativeName>
</protein>
<feature type="chain" id="PRO_0000096432" description="Mercuric transport protein MerT">
    <location>
        <begin position="1"/>
        <end position="116"/>
    </location>
</feature>
<feature type="transmembrane region" description="Helical" evidence="2">
    <location>
        <begin position="16"/>
        <end position="36"/>
    </location>
</feature>
<feature type="transmembrane region" description="Helical" evidence="2">
    <location>
        <begin position="46"/>
        <end position="66"/>
    </location>
</feature>
<feature type="transmembrane region" description="Helical" evidence="2">
    <location>
        <begin position="94"/>
        <end position="114"/>
    </location>
</feature>
<feature type="binding site" evidence="1">
    <location>
        <position position="24"/>
    </location>
    <ligand>
        <name>Hg(2+)</name>
        <dbReference type="ChEBI" id="CHEBI:16793"/>
    </ligand>
</feature>
<feature type="binding site" evidence="1">
    <location>
        <position position="25"/>
    </location>
    <ligand>
        <name>Hg(2+)</name>
        <dbReference type="ChEBI" id="CHEBI:16793"/>
    </ligand>
</feature>
<feature type="binding site" evidence="1">
    <location>
        <position position="76"/>
    </location>
    <ligand>
        <name>Hg(2+)</name>
        <dbReference type="ChEBI" id="CHEBI:16793"/>
    </ligand>
</feature>
<feature type="binding site" evidence="1">
    <location>
        <position position="82"/>
    </location>
    <ligand>
        <name>Hg(2+)</name>
        <dbReference type="ChEBI" id="CHEBI:16793"/>
    </ligand>
</feature>
<dbReference type="EMBL" id="AL513383">
    <property type="protein sequence ID" value="CAD09816.1"/>
    <property type="molecule type" value="Genomic_DNA"/>
</dbReference>
<dbReference type="RefSeq" id="NP_569424.1">
    <property type="nucleotide sequence ID" value="NC_003384.1"/>
</dbReference>
<dbReference type="RefSeq" id="WP_001294663.1">
    <property type="nucleotide sequence ID" value="NZ_CDET01000128.1"/>
</dbReference>
<dbReference type="GeneID" id="93248042"/>
<dbReference type="KEGG" id="sty:HCM1.234c"/>
<dbReference type="PATRIC" id="fig|220341.7.peg.5251"/>
<dbReference type="HOGENOM" id="CLU_151729_0_0_6"/>
<dbReference type="OMA" id="FAYRRIW"/>
<dbReference type="Proteomes" id="UP000000541">
    <property type="component" value="Plasmid pHCM1"/>
</dbReference>
<dbReference type="GO" id="GO:0005886">
    <property type="term" value="C:plasma membrane"/>
    <property type="evidence" value="ECO:0007669"/>
    <property type="project" value="UniProtKB-SubCell"/>
</dbReference>
<dbReference type="GO" id="GO:0015097">
    <property type="term" value="F:mercury ion transmembrane transporter activity"/>
    <property type="evidence" value="ECO:0007669"/>
    <property type="project" value="InterPro"/>
</dbReference>
<dbReference type="GO" id="GO:0046872">
    <property type="term" value="F:metal ion binding"/>
    <property type="evidence" value="ECO:0007669"/>
    <property type="project" value="UniProtKB-KW"/>
</dbReference>
<dbReference type="Gene3D" id="1.10.287.910">
    <property type="entry name" value="bacterial mercury transporter, merf"/>
    <property type="match status" value="1"/>
</dbReference>
<dbReference type="InterPro" id="IPR003457">
    <property type="entry name" value="Transprt_MerT"/>
</dbReference>
<dbReference type="NCBIfam" id="NF010314">
    <property type="entry name" value="PRK13751.2"/>
    <property type="match status" value="1"/>
</dbReference>
<dbReference type="Pfam" id="PF02411">
    <property type="entry name" value="MerT"/>
    <property type="match status" value="1"/>
</dbReference>
<proteinExistence type="inferred from homology"/>
<evidence type="ECO:0000250" key="1">
    <source>
        <dbReference type="UniProtKB" id="P04140"/>
    </source>
</evidence>
<evidence type="ECO:0000255" key="2"/>
<evidence type="ECO:0000305" key="3"/>
<geneLocation type="plasmid">
    <name>pHCM1</name>
</geneLocation>
<comment type="function">
    <text evidence="1">Involved in mercury resistance. Probably transfers a mercuric ion from the periplasmic Hg(2+)-binding protein MerP to the cytoplasmic mercuric reductase MerA.</text>
</comment>
<comment type="subcellular location">
    <subcellularLocation>
        <location evidence="3">Cell inner membrane</location>
        <topology evidence="2">Multi-pass membrane protein</topology>
    </subcellularLocation>
</comment>
<comment type="similarity">
    <text evidence="3">Belongs to the MerT family.</text>
</comment>